<accession>Q1BSM4</accession>
<keyword id="KW-0028">Amino-acid biosynthesis</keyword>
<keyword id="KW-0055">Arginine biosynthesis</keyword>
<keyword id="KW-0067">ATP-binding</keyword>
<keyword id="KW-0963">Cytoplasm</keyword>
<keyword id="KW-0418">Kinase</keyword>
<keyword id="KW-0547">Nucleotide-binding</keyword>
<keyword id="KW-0808">Transferase</keyword>
<reference key="1">
    <citation type="submission" date="2006-05" db="EMBL/GenBank/DDBJ databases">
        <title>Complete sequence of chromosome 1 of Burkholderia cenocepacia AU 1054.</title>
        <authorList>
            <consortium name="US DOE Joint Genome Institute"/>
            <person name="Copeland A."/>
            <person name="Lucas S."/>
            <person name="Lapidus A."/>
            <person name="Barry K."/>
            <person name="Detter J.C."/>
            <person name="Glavina del Rio T."/>
            <person name="Hammon N."/>
            <person name="Israni S."/>
            <person name="Dalin E."/>
            <person name="Tice H."/>
            <person name="Pitluck S."/>
            <person name="Chain P."/>
            <person name="Malfatti S."/>
            <person name="Shin M."/>
            <person name="Vergez L."/>
            <person name="Schmutz J."/>
            <person name="Larimer F."/>
            <person name="Land M."/>
            <person name="Hauser L."/>
            <person name="Kyrpides N."/>
            <person name="Lykidis A."/>
            <person name="LiPuma J.J."/>
            <person name="Konstantinidis K."/>
            <person name="Tiedje J.M."/>
            <person name="Richardson P."/>
        </authorList>
    </citation>
    <scope>NUCLEOTIDE SEQUENCE [LARGE SCALE GENOMIC DNA]</scope>
    <source>
        <strain>AU 1054</strain>
    </source>
</reference>
<dbReference type="EC" id="2.7.2.8" evidence="1"/>
<dbReference type="EMBL" id="CP000378">
    <property type="protein sequence ID" value="ABF77381.1"/>
    <property type="status" value="ALT_INIT"/>
    <property type="molecule type" value="Genomic_DNA"/>
</dbReference>
<dbReference type="SMR" id="Q1BSM4"/>
<dbReference type="HOGENOM" id="CLU_053680_0_0_4"/>
<dbReference type="UniPathway" id="UPA00068">
    <property type="reaction ID" value="UER00107"/>
</dbReference>
<dbReference type="GO" id="GO:0005737">
    <property type="term" value="C:cytoplasm"/>
    <property type="evidence" value="ECO:0007669"/>
    <property type="project" value="UniProtKB-SubCell"/>
</dbReference>
<dbReference type="GO" id="GO:0003991">
    <property type="term" value="F:acetylglutamate kinase activity"/>
    <property type="evidence" value="ECO:0007669"/>
    <property type="project" value="UniProtKB-UniRule"/>
</dbReference>
<dbReference type="GO" id="GO:0005524">
    <property type="term" value="F:ATP binding"/>
    <property type="evidence" value="ECO:0007669"/>
    <property type="project" value="UniProtKB-UniRule"/>
</dbReference>
<dbReference type="GO" id="GO:0042450">
    <property type="term" value="P:arginine biosynthetic process via ornithine"/>
    <property type="evidence" value="ECO:0007669"/>
    <property type="project" value="UniProtKB-UniRule"/>
</dbReference>
<dbReference type="GO" id="GO:0006526">
    <property type="term" value="P:L-arginine biosynthetic process"/>
    <property type="evidence" value="ECO:0007669"/>
    <property type="project" value="UniProtKB-UniPathway"/>
</dbReference>
<dbReference type="CDD" id="cd04250">
    <property type="entry name" value="AAK_NAGK-C"/>
    <property type="match status" value="1"/>
</dbReference>
<dbReference type="FunFam" id="3.40.1160.10:FF:000004">
    <property type="entry name" value="Acetylglutamate kinase"/>
    <property type="match status" value="1"/>
</dbReference>
<dbReference type="Gene3D" id="3.40.1160.10">
    <property type="entry name" value="Acetylglutamate kinase-like"/>
    <property type="match status" value="1"/>
</dbReference>
<dbReference type="HAMAP" id="MF_00082">
    <property type="entry name" value="ArgB"/>
    <property type="match status" value="1"/>
</dbReference>
<dbReference type="InterPro" id="IPR036393">
    <property type="entry name" value="AceGlu_kinase-like_sf"/>
</dbReference>
<dbReference type="InterPro" id="IPR004662">
    <property type="entry name" value="AcgluKinase_fam"/>
</dbReference>
<dbReference type="InterPro" id="IPR037528">
    <property type="entry name" value="ArgB"/>
</dbReference>
<dbReference type="InterPro" id="IPR001048">
    <property type="entry name" value="Asp/Glu/Uridylate_kinase"/>
</dbReference>
<dbReference type="InterPro" id="IPR041727">
    <property type="entry name" value="NAGK-C"/>
</dbReference>
<dbReference type="NCBIfam" id="TIGR00761">
    <property type="entry name" value="argB"/>
    <property type="match status" value="1"/>
</dbReference>
<dbReference type="PANTHER" id="PTHR23342">
    <property type="entry name" value="N-ACETYLGLUTAMATE SYNTHASE"/>
    <property type="match status" value="1"/>
</dbReference>
<dbReference type="PANTHER" id="PTHR23342:SF0">
    <property type="entry name" value="N-ACETYLGLUTAMATE SYNTHASE, MITOCHONDRIAL"/>
    <property type="match status" value="1"/>
</dbReference>
<dbReference type="Pfam" id="PF00696">
    <property type="entry name" value="AA_kinase"/>
    <property type="match status" value="1"/>
</dbReference>
<dbReference type="PIRSF" id="PIRSF000728">
    <property type="entry name" value="NAGK"/>
    <property type="match status" value="1"/>
</dbReference>
<dbReference type="SUPFAM" id="SSF53633">
    <property type="entry name" value="Carbamate kinase-like"/>
    <property type="match status" value="1"/>
</dbReference>
<proteinExistence type="inferred from homology"/>
<evidence type="ECO:0000255" key="1">
    <source>
        <dbReference type="HAMAP-Rule" id="MF_00082"/>
    </source>
</evidence>
<evidence type="ECO:0000305" key="2"/>
<protein>
    <recommendedName>
        <fullName evidence="1">Acetylglutamate kinase</fullName>
        <ecNumber evidence="1">2.7.2.8</ecNumber>
    </recommendedName>
    <alternativeName>
        <fullName evidence="1">N-acetyl-L-glutamate 5-phosphotransferase</fullName>
    </alternativeName>
    <alternativeName>
        <fullName evidence="1">NAG kinase</fullName>
        <shortName evidence="1">NAGK</shortName>
    </alternativeName>
</protein>
<comment type="function">
    <text evidence="1">Catalyzes the ATP-dependent phosphorylation of N-acetyl-L-glutamate.</text>
</comment>
<comment type="catalytic activity">
    <reaction evidence="1">
        <text>N-acetyl-L-glutamate + ATP = N-acetyl-L-glutamyl 5-phosphate + ADP</text>
        <dbReference type="Rhea" id="RHEA:14629"/>
        <dbReference type="ChEBI" id="CHEBI:30616"/>
        <dbReference type="ChEBI" id="CHEBI:44337"/>
        <dbReference type="ChEBI" id="CHEBI:57936"/>
        <dbReference type="ChEBI" id="CHEBI:456216"/>
        <dbReference type="EC" id="2.7.2.8"/>
    </reaction>
</comment>
<comment type="pathway">
    <text evidence="1">Amino-acid biosynthesis; L-arginine biosynthesis; N(2)-acetyl-L-ornithine from L-glutamate: step 2/4.</text>
</comment>
<comment type="subcellular location">
    <subcellularLocation>
        <location evidence="1">Cytoplasm</location>
    </subcellularLocation>
</comment>
<comment type="similarity">
    <text evidence="1">Belongs to the acetylglutamate kinase family. ArgB subfamily.</text>
</comment>
<comment type="sequence caution" evidence="2">
    <conflict type="erroneous initiation">
        <sequence resource="EMBL-CDS" id="ABF77381"/>
    </conflict>
</comment>
<sequence>MSEPIDLSQIAPTLKAEILAEALPYIRRYHGKTVVIKYGGNAMTEERLKQGFARDVILLKLVGINPVIVHGGGPQIDHALKKIGKAGTFIQGMRVTDEETMEVVEWVLGGEVQQDIVMLINHFGGHAVGLTGKDGGLIHARKLLMPDRDNPGQYIDIGQVGEVEAINPAVVKALQDDAFIPVISPIGFGEDGLSYNINADLVAGKLATVLNAEKLLMMTNIPGVMDKDGNLLTDLSAREIDALFEDGTISGGMLPKISSALDAAKSGVKSVHIVDGRIEHSVLLEILTEQPFGTMIRSH</sequence>
<gene>
    <name evidence="1" type="primary">argB</name>
    <name type="ordered locus">Bcen_2482</name>
</gene>
<organism>
    <name type="scientific">Burkholderia orbicola (strain AU 1054)</name>
    <dbReference type="NCBI Taxonomy" id="331271"/>
    <lineage>
        <taxon>Bacteria</taxon>
        <taxon>Pseudomonadati</taxon>
        <taxon>Pseudomonadota</taxon>
        <taxon>Betaproteobacteria</taxon>
        <taxon>Burkholderiales</taxon>
        <taxon>Burkholderiaceae</taxon>
        <taxon>Burkholderia</taxon>
        <taxon>Burkholderia cepacia complex</taxon>
        <taxon>Burkholderia orbicola</taxon>
    </lineage>
</organism>
<name>ARGB_BURO1</name>
<feature type="chain" id="PRO_0000264686" description="Acetylglutamate kinase">
    <location>
        <begin position="1"/>
        <end position="299"/>
    </location>
</feature>
<feature type="binding site" evidence="1">
    <location>
        <begin position="72"/>
        <end position="73"/>
    </location>
    <ligand>
        <name>substrate</name>
    </ligand>
</feature>
<feature type="binding site" evidence="1">
    <location>
        <position position="94"/>
    </location>
    <ligand>
        <name>substrate</name>
    </ligand>
</feature>
<feature type="binding site" evidence="1">
    <location>
        <position position="196"/>
    </location>
    <ligand>
        <name>substrate</name>
    </ligand>
</feature>
<feature type="site" description="Transition state stabilizer" evidence="1">
    <location>
        <position position="37"/>
    </location>
</feature>
<feature type="site" description="Transition state stabilizer" evidence="1">
    <location>
        <position position="256"/>
    </location>
</feature>